<feature type="chain" id="PRO_1000073932" description="UPF0060 membrane protein SaurJH1_2408">
    <location>
        <begin position="1"/>
        <end position="108"/>
    </location>
</feature>
<feature type="transmembrane region" description="Helical" evidence="1">
    <location>
        <begin position="5"/>
        <end position="25"/>
    </location>
</feature>
<feature type="transmembrane region" description="Helical" evidence="1">
    <location>
        <begin position="31"/>
        <end position="51"/>
    </location>
</feature>
<feature type="transmembrane region" description="Helical" evidence="1">
    <location>
        <begin position="60"/>
        <end position="80"/>
    </location>
</feature>
<feature type="transmembrane region" description="Helical" evidence="1">
    <location>
        <begin position="86"/>
        <end position="106"/>
    </location>
</feature>
<sequence length="108" mass="11758">MLYPIFIFILAGLCEIGGGYLIWLWLREGQSSLVGLIGGAILMLYGVIATFQSFPSFGRVYAAYGGVFIIMSLIFAMVVDKQMPDKYDVIGAIICIVGVLVMLLPSRA</sequence>
<gene>
    <name type="ordered locus">SaurJH1_2408</name>
</gene>
<proteinExistence type="inferred from homology"/>
<comment type="subcellular location">
    <subcellularLocation>
        <location evidence="1">Cell membrane</location>
        <topology evidence="1">Multi-pass membrane protein</topology>
    </subcellularLocation>
</comment>
<comment type="similarity">
    <text evidence="1">Belongs to the UPF0060 family.</text>
</comment>
<accession>A6U465</accession>
<dbReference type="EMBL" id="CP000736">
    <property type="protein sequence ID" value="ABR53233.1"/>
    <property type="molecule type" value="Genomic_DNA"/>
</dbReference>
<dbReference type="SMR" id="A6U465"/>
<dbReference type="KEGG" id="sah:SaurJH1_2408"/>
<dbReference type="HOGENOM" id="CLU_117653_0_1_9"/>
<dbReference type="GO" id="GO:0005886">
    <property type="term" value="C:plasma membrane"/>
    <property type="evidence" value="ECO:0007669"/>
    <property type="project" value="UniProtKB-SubCell"/>
</dbReference>
<dbReference type="HAMAP" id="MF_00010">
    <property type="entry name" value="UPF0060"/>
    <property type="match status" value="1"/>
</dbReference>
<dbReference type="InterPro" id="IPR003844">
    <property type="entry name" value="UPF0060"/>
</dbReference>
<dbReference type="NCBIfam" id="NF002586">
    <property type="entry name" value="PRK02237.1"/>
    <property type="match status" value="1"/>
</dbReference>
<dbReference type="PANTHER" id="PTHR36116">
    <property type="entry name" value="UPF0060 MEMBRANE PROTEIN YNFA"/>
    <property type="match status" value="1"/>
</dbReference>
<dbReference type="PANTHER" id="PTHR36116:SF1">
    <property type="entry name" value="UPF0060 MEMBRANE PROTEIN YNFA"/>
    <property type="match status" value="1"/>
</dbReference>
<dbReference type="Pfam" id="PF02694">
    <property type="entry name" value="UPF0060"/>
    <property type="match status" value="1"/>
</dbReference>
<dbReference type="SUPFAM" id="SSF103481">
    <property type="entry name" value="Multidrug resistance efflux transporter EmrE"/>
    <property type="match status" value="1"/>
</dbReference>
<evidence type="ECO:0000255" key="1">
    <source>
        <dbReference type="HAMAP-Rule" id="MF_00010"/>
    </source>
</evidence>
<keyword id="KW-1003">Cell membrane</keyword>
<keyword id="KW-0472">Membrane</keyword>
<keyword id="KW-0812">Transmembrane</keyword>
<keyword id="KW-1133">Transmembrane helix</keyword>
<name>Y2408_STAA2</name>
<protein>
    <recommendedName>
        <fullName evidence="1">UPF0060 membrane protein SaurJH1_2408</fullName>
    </recommendedName>
</protein>
<reference key="1">
    <citation type="submission" date="2007-06" db="EMBL/GenBank/DDBJ databases">
        <title>Complete sequence of chromosome of Staphylococcus aureus subsp. aureus JH1.</title>
        <authorList>
            <consortium name="US DOE Joint Genome Institute"/>
            <person name="Copeland A."/>
            <person name="Lucas S."/>
            <person name="Lapidus A."/>
            <person name="Barry K."/>
            <person name="Detter J.C."/>
            <person name="Glavina del Rio T."/>
            <person name="Hammon N."/>
            <person name="Israni S."/>
            <person name="Dalin E."/>
            <person name="Tice H."/>
            <person name="Pitluck S."/>
            <person name="Chain P."/>
            <person name="Malfatti S."/>
            <person name="Shin M."/>
            <person name="Vergez L."/>
            <person name="Schmutz J."/>
            <person name="Larimer F."/>
            <person name="Land M."/>
            <person name="Hauser L."/>
            <person name="Kyrpides N."/>
            <person name="Ivanova N."/>
            <person name="Tomasz A."/>
            <person name="Richardson P."/>
        </authorList>
    </citation>
    <scope>NUCLEOTIDE SEQUENCE [LARGE SCALE GENOMIC DNA]</scope>
    <source>
        <strain>JH1</strain>
    </source>
</reference>
<organism>
    <name type="scientific">Staphylococcus aureus (strain JH1)</name>
    <dbReference type="NCBI Taxonomy" id="359787"/>
    <lineage>
        <taxon>Bacteria</taxon>
        <taxon>Bacillati</taxon>
        <taxon>Bacillota</taxon>
        <taxon>Bacilli</taxon>
        <taxon>Bacillales</taxon>
        <taxon>Staphylococcaceae</taxon>
        <taxon>Staphylococcus</taxon>
    </lineage>
</organism>